<accession>B5X3C1</accession>
<dbReference type="EC" id="3.2.1.46" evidence="2"/>
<dbReference type="EMBL" id="BT045540">
    <property type="protein sequence ID" value="ACI33802.1"/>
    <property type="molecule type" value="mRNA"/>
</dbReference>
<dbReference type="RefSeq" id="NP_001133732.1">
    <property type="nucleotide sequence ID" value="NM_001140260.1"/>
</dbReference>
<dbReference type="SMR" id="B5X3C1"/>
<dbReference type="STRING" id="8030.ENSSSAP00000044309"/>
<dbReference type="CAZy" id="GH59">
    <property type="family name" value="Glycoside Hydrolase Family 59"/>
</dbReference>
<dbReference type="GlyCosmos" id="B5X3C1">
    <property type="glycosylation" value="6 sites, No reported glycans"/>
</dbReference>
<dbReference type="PaxDb" id="8030-ENSSSAP00000044309"/>
<dbReference type="Ensembl" id="ENSSSAT00070055256">
    <property type="protein sequence ID" value="ENSSSAP00070053055"/>
    <property type="gene ID" value="ENSSSAG00070034436"/>
</dbReference>
<dbReference type="GeneID" id="100195231"/>
<dbReference type="KEGG" id="sasa:100195231"/>
<dbReference type="CTD" id="406385"/>
<dbReference type="OrthoDB" id="314541at7898"/>
<dbReference type="Proteomes" id="UP000087266">
    <property type="component" value="Chromosome ssa01"/>
</dbReference>
<dbReference type="Bgee" id="ENSSSAG00000046330">
    <property type="expression patterns" value="Expressed in ileum and 24 other cell types or tissues"/>
</dbReference>
<dbReference type="GO" id="GO:0005764">
    <property type="term" value="C:lysosome"/>
    <property type="evidence" value="ECO:0007669"/>
    <property type="project" value="UniProtKB-SubCell"/>
</dbReference>
<dbReference type="GO" id="GO:0016020">
    <property type="term" value="C:membrane"/>
    <property type="evidence" value="ECO:0007669"/>
    <property type="project" value="GOC"/>
</dbReference>
<dbReference type="GO" id="GO:0004336">
    <property type="term" value="F:galactosylceramidase activity"/>
    <property type="evidence" value="ECO:0000250"/>
    <property type="project" value="UniProtKB"/>
</dbReference>
<dbReference type="GO" id="GO:0006683">
    <property type="term" value="P:galactosylceramide catabolic process"/>
    <property type="evidence" value="ECO:0000250"/>
    <property type="project" value="UniProtKB"/>
</dbReference>
<dbReference type="FunFam" id="2.60.120.560:FF:000001">
    <property type="entry name" value="galactocerebrosidase precursor"/>
    <property type="match status" value="1"/>
</dbReference>
<dbReference type="FunFam" id="3.20.20.70:FF:000091">
    <property type="entry name" value="galactocerebrosidase precursor"/>
    <property type="match status" value="1"/>
</dbReference>
<dbReference type="FunFam" id="3.20.20.80:FF:000026">
    <property type="entry name" value="galactocerebrosidase precursor"/>
    <property type="match status" value="1"/>
</dbReference>
<dbReference type="Gene3D" id="3.20.20.70">
    <property type="entry name" value="Aldolase class I"/>
    <property type="match status" value="1"/>
</dbReference>
<dbReference type="Gene3D" id="2.60.120.560">
    <property type="entry name" value="Exo-inulinase, domain 1"/>
    <property type="match status" value="1"/>
</dbReference>
<dbReference type="Gene3D" id="3.20.20.80">
    <property type="entry name" value="Glycosidases"/>
    <property type="match status" value="1"/>
</dbReference>
<dbReference type="InterPro" id="IPR013785">
    <property type="entry name" value="Aldolase_TIM"/>
</dbReference>
<dbReference type="InterPro" id="IPR049162">
    <property type="entry name" value="GH59_C"/>
</dbReference>
<dbReference type="InterPro" id="IPR049161">
    <property type="entry name" value="GH59_cat"/>
</dbReference>
<dbReference type="InterPro" id="IPR001286">
    <property type="entry name" value="Glyco_hydro_59"/>
</dbReference>
<dbReference type="InterPro" id="IPR035394">
    <property type="entry name" value="Glyco_hydro_59_dom"/>
</dbReference>
<dbReference type="InterPro" id="IPR017853">
    <property type="entry name" value="Glycoside_hydrolase_SF"/>
</dbReference>
<dbReference type="PANTHER" id="PTHR15172">
    <property type="entry name" value="GALACTOCEREBROSIDASE"/>
    <property type="match status" value="1"/>
</dbReference>
<dbReference type="PANTHER" id="PTHR15172:SF1">
    <property type="entry name" value="GALACTOCEREBROSIDASE"/>
    <property type="match status" value="1"/>
</dbReference>
<dbReference type="Pfam" id="PF02057">
    <property type="entry name" value="Glyco_hydro_59"/>
    <property type="match status" value="1"/>
</dbReference>
<dbReference type="Pfam" id="PF21708">
    <property type="entry name" value="Glyco_hydro_59_C"/>
    <property type="match status" value="1"/>
</dbReference>
<dbReference type="Pfam" id="PF17387">
    <property type="entry name" value="Glyco_hydro_59M"/>
    <property type="match status" value="1"/>
</dbReference>
<dbReference type="PRINTS" id="PR00850">
    <property type="entry name" value="GLHYDRLASE59"/>
</dbReference>
<dbReference type="SUPFAM" id="SSF51445">
    <property type="entry name" value="(Trans)glycosidases"/>
    <property type="match status" value="1"/>
</dbReference>
<gene>
    <name evidence="2" type="primary">galc</name>
</gene>
<sequence>MIYKLYFAIALCFSLCFDLCIAESYVLDDKVGLGRTFDGIGGLSGGGATSRLLVNYAEPYRSQILDYLFKPNFGASLHILKVEIGGDAQTTDGTEPSHMHYENDENFFRGYEWWLMREAKKRNPNITLIGLPWAFPGWVGHGKNWPYDFPDITASYVVSWILGAKHYHDLNIDYVGIWNERNFDSKYIKLLRYTLDKSGLERVRIIASDNLWQPITYSLCVDQELADAVDVIGAHYPGTTTVIEALKTQKKLWSSEDYSTFNDEVGGGCWARILNQNYVNGLMTATISWNLVASYYEDLPFGRDGLMTAEEPWTGNYVVESPIWITAHTTQFSQPGWTYLQTVGHLVHGGSYVALTDSNGNLTVVIETMTHDHSVCIRPPLLPFNVTAQNVTFQLKGSFALIKELQVWQSRFDFKTKKPFFFKKLSPLKISDGSFTLSLDVDEVYTLTTISTGLKGTYPDPPTSGPFPKVYFDDFNVANPSFSEAPDFADQTGVFEYYINLTDPGPHVFTLRQVVTQMPVTWATDADQTISVIGDYKWQNLTVTCDVFMETVKTGGVFIAARVDKGGQSVRSAKGVFFWVFADGSYKVTNDLVGKTVLAEGLSGTRAYGWHTLTLTVEGQYATGLLNGYPLWKDAVVLGPKNGWAAIGTHSFELAQFDNFAVEAKL</sequence>
<comment type="function">
    <text evidence="2">Hydrolyzes the galactose ester bonds of glycolipids such as galactosylceramide and galactosylsphingosine.</text>
</comment>
<comment type="catalytic activity">
    <reaction evidence="2">
        <text>a beta-D-galactosyl-(1&lt;-&gt;1')-N-acylsphing-4-enine + H2O = an N-acylsphing-4-enine + D-galactose</text>
        <dbReference type="Rhea" id="RHEA:14297"/>
        <dbReference type="ChEBI" id="CHEBI:4139"/>
        <dbReference type="ChEBI" id="CHEBI:15377"/>
        <dbReference type="ChEBI" id="CHEBI:18390"/>
        <dbReference type="ChEBI" id="CHEBI:52639"/>
        <dbReference type="EC" id="3.2.1.46"/>
    </reaction>
    <physiologicalReaction direction="left-to-right" evidence="2">
        <dbReference type="Rhea" id="RHEA:14298"/>
    </physiologicalReaction>
</comment>
<comment type="catalytic activity">
    <reaction evidence="2">
        <text>beta-D-galactosyl-(1&lt;-&gt;1)-sphing-4-enine + H2O = sphing-4-enine + D-galactose</text>
        <dbReference type="Rhea" id="RHEA:43908"/>
        <dbReference type="ChEBI" id="CHEBI:4139"/>
        <dbReference type="ChEBI" id="CHEBI:15377"/>
        <dbReference type="ChEBI" id="CHEBI:57756"/>
        <dbReference type="ChEBI" id="CHEBI:57934"/>
    </reaction>
    <physiologicalReaction direction="left-to-right" evidence="2">
        <dbReference type="Rhea" id="RHEA:43909"/>
    </physiologicalReaction>
</comment>
<comment type="catalytic activity">
    <reaction evidence="3">
        <text>a D-galactosylceramide + H2O = an N-acyl-sphingoid base + D-galactose</text>
        <dbReference type="Rhea" id="RHEA:43412"/>
        <dbReference type="ChEBI" id="CHEBI:4139"/>
        <dbReference type="ChEBI" id="CHEBI:15377"/>
        <dbReference type="ChEBI" id="CHEBI:36498"/>
        <dbReference type="ChEBI" id="CHEBI:83273"/>
    </reaction>
    <physiologicalReaction direction="left-to-right" evidence="3">
        <dbReference type="Rhea" id="RHEA:43413"/>
    </physiologicalReaction>
</comment>
<comment type="subcellular location">
    <subcellularLocation>
        <location evidence="1">Lysosome</location>
    </subcellularLocation>
</comment>
<comment type="similarity">
    <text evidence="5">Belongs to the glycosyl hydrolase 59 family.</text>
</comment>
<reference key="1">
    <citation type="journal article" date="2010" name="BMC Genomics">
        <title>Salmo salar and Esox lucius full-length cDNA sequences reveal changes in evolutionary pressures on a post-tetraploidization genome.</title>
        <authorList>
            <person name="Leong J.S."/>
            <person name="Jantzen S.G."/>
            <person name="von Schalburg K.R."/>
            <person name="Cooper G.A."/>
            <person name="Messmer A.M."/>
            <person name="Liao N.Y."/>
            <person name="Munro S."/>
            <person name="Moore R."/>
            <person name="Holt R.A."/>
            <person name="Jones S.J."/>
            <person name="Davidson W.S."/>
            <person name="Koop B.F."/>
        </authorList>
    </citation>
    <scope>NUCLEOTIDE SEQUENCE [LARGE SCALE MRNA]</scope>
    <source>
        <tissue>Brain</tissue>
    </source>
</reference>
<feature type="signal peptide" evidence="4">
    <location>
        <begin position="1"/>
        <end position="22"/>
    </location>
</feature>
<feature type="chain" id="PRO_0000370714" description="Galactocerebrosidase">
    <location>
        <begin position="23"/>
        <end position="666"/>
    </location>
</feature>
<feature type="active site" description="Proton donor/acceptor" evidence="1">
    <location>
        <position position="180"/>
    </location>
</feature>
<feature type="active site" description="Nucleophile" evidence="1">
    <location>
        <position position="256"/>
    </location>
</feature>
<feature type="binding site" evidence="1">
    <location>
        <position position="91"/>
    </location>
    <ligand>
        <name>substrate</name>
    </ligand>
</feature>
<feature type="binding site" evidence="1">
    <location>
        <position position="133"/>
    </location>
    <ligand>
        <name>substrate</name>
    </ligand>
</feature>
<feature type="binding site" evidence="1">
    <location>
        <position position="179"/>
    </location>
    <ligand>
        <name>substrate</name>
    </ligand>
</feature>
<feature type="binding site" evidence="1">
    <location>
        <position position="378"/>
    </location>
    <ligand>
        <name>substrate</name>
    </ligand>
</feature>
<feature type="glycosylation site" description="N-linked (GlcNAc...) asparagine" evidence="4">
    <location>
        <position position="125"/>
    </location>
</feature>
<feature type="glycosylation site" description="N-linked (GlcNAc...) asparagine" evidence="4">
    <location>
        <position position="361"/>
    </location>
</feature>
<feature type="glycosylation site" description="N-linked (GlcNAc...) asparagine" evidence="4">
    <location>
        <position position="385"/>
    </location>
</feature>
<feature type="glycosylation site" description="N-linked (GlcNAc...) asparagine" evidence="4">
    <location>
        <position position="390"/>
    </location>
</feature>
<feature type="glycosylation site" description="N-linked (GlcNAc...) asparagine" evidence="4">
    <location>
        <position position="500"/>
    </location>
</feature>
<feature type="glycosylation site" description="N-linked (GlcNAc...) asparagine" evidence="4">
    <location>
        <position position="540"/>
    </location>
</feature>
<feature type="disulfide bond" evidence="1">
    <location>
        <begin position="269"/>
        <end position="376"/>
    </location>
</feature>
<evidence type="ECO:0000250" key="1"/>
<evidence type="ECO:0000250" key="2">
    <source>
        <dbReference type="UniProtKB" id="P54803"/>
    </source>
</evidence>
<evidence type="ECO:0000250" key="3">
    <source>
        <dbReference type="UniProtKB" id="P54818"/>
    </source>
</evidence>
<evidence type="ECO:0000255" key="4"/>
<evidence type="ECO:0000305" key="5"/>
<organism>
    <name type="scientific">Salmo salar</name>
    <name type="common">Atlantic salmon</name>
    <dbReference type="NCBI Taxonomy" id="8030"/>
    <lineage>
        <taxon>Eukaryota</taxon>
        <taxon>Metazoa</taxon>
        <taxon>Chordata</taxon>
        <taxon>Craniata</taxon>
        <taxon>Vertebrata</taxon>
        <taxon>Euteleostomi</taxon>
        <taxon>Actinopterygii</taxon>
        <taxon>Neopterygii</taxon>
        <taxon>Teleostei</taxon>
        <taxon>Protacanthopterygii</taxon>
        <taxon>Salmoniformes</taxon>
        <taxon>Salmonidae</taxon>
        <taxon>Salmoninae</taxon>
        <taxon>Salmo</taxon>
    </lineage>
</organism>
<protein>
    <recommendedName>
        <fullName evidence="2">Galactocerebrosidase</fullName>
        <shortName>GALCERase</shortName>
        <ecNumber evidence="2">3.2.1.46</ecNumber>
    </recommendedName>
    <alternativeName>
        <fullName>Galactosylceramidase</fullName>
    </alternativeName>
</protein>
<keyword id="KW-1015">Disulfide bond</keyword>
<keyword id="KW-0325">Glycoprotein</keyword>
<keyword id="KW-0326">Glycosidase</keyword>
<keyword id="KW-0378">Hydrolase</keyword>
<keyword id="KW-0442">Lipid degradation</keyword>
<keyword id="KW-0443">Lipid metabolism</keyword>
<keyword id="KW-0458">Lysosome</keyword>
<keyword id="KW-1185">Reference proteome</keyword>
<keyword id="KW-0732">Signal</keyword>
<keyword id="KW-0746">Sphingolipid metabolism</keyword>
<name>GALC_SALSA</name>
<proteinExistence type="evidence at transcript level"/>